<gene>
    <name evidence="1" type="primary">rplU</name>
    <name type="ordered locus">Nther_0528</name>
</gene>
<name>RL21_NATTJ</name>
<comment type="function">
    <text evidence="1">This protein binds to 23S rRNA in the presence of protein L20.</text>
</comment>
<comment type="subunit">
    <text evidence="1">Part of the 50S ribosomal subunit. Contacts protein L20.</text>
</comment>
<comment type="similarity">
    <text evidence="1">Belongs to the bacterial ribosomal protein bL21 family.</text>
</comment>
<keyword id="KW-1185">Reference proteome</keyword>
<keyword id="KW-0687">Ribonucleoprotein</keyword>
<keyword id="KW-0689">Ribosomal protein</keyword>
<keyword id="KW-0694">RNA-binding</keyword>
<keyword id="KW-0699">rRNA-binding</keyword>
<organism>
    <name type="scientific">Natranaerobius thermophilus (strain ATCC BAA-1301 / DSM 18059 / JW/NM-WN-LF)</name>
    <dbReference type="NCBI Taxonomy" id="457570"/>
    <lineage>
        <taxon>Bacteria</taxon>
        <taxon>Bacillati</taxon>
        <taxon>Bacillota</taxon>
        <taxon>Clostridia</taxon>
        <taxon>Natranaerobiales</taxon>
        <taxon>Natranaerobiaceae</taxon>
        <taxon>Natranaerobius</taxon>
    </lineage>
</organism>
<accession>B2A6B3</accession>
<protein>
    <recommendedName>
        <fullName evidence="1">Large ribosomal subunit protein bL21</fullName>
    </recommendedName>
    <alternativeName>
        <fullName evidence="2">50S ribosomal protein L21</fullName>
    </alternativeName>
</protein>
<sequence length="105" mass="11978">MYAVIETGGKQYKVSEGDVLEIEKLSQETEEQVTFDKVLLVKDDENVKVGTPVLEEAQVEGTVLEHGKGEKVTVFKYKPKKNYRRKQGHRQPFSKVKIDKIKLNG</sequence>
<dbReference type="EMBL" id="CP001034">
    <property type="protein sequence ID" value="ACB84124.1"/>
    <property type="molecule type" value="Genomic_DNA"/>
</dbReference>
<dbReference type="RefSeq" id="WP_012447010.1">
    <property type="nucleotide sequence ID" value="NC_010718.1"/>
</dbReference>
<dbReference type="SMR" id="B2A6B3"/>
<dbReference type="FunCoup" id="B2A6B3">
    <property type="interactions" value="360"/>
</dbReference>
<dbReference type="STRING" id="457570.Nther_0528"/>
<dbReference type="KEGG" id="nth:Nther_0528"/>
<dbReference type="eggNOG" id="COG0261">
    <property type="taxonomic scope" value="Bacteria"/>
</dbReference>
<dbReference type="HOGENOM" id="CLU_061463_3_2_9"/>
<dbReference type="InParanoid" id="B2A6B3"/>
<dbReference type="OrthoDB" id="9813334at2"/>
<dbReference type="Proteomes" id="UP000001683">
    <property type="component" value="Chromosome"/>
</dbReference>
<dbReference type="GO" id="GO:0005737">
    <property type="term" value="C:cytoplasm"/>
    <property type="evidence" value="ECO:0007669"/>
    <property type="project" value="UniProtKB-ARBA"/>
</dbReference>
<dbReference type="GO" id="GO:1990904">
    <property type="term" value="C:ribonucleoprotein complex"/>
    <property type="evidence" value="ECO:0007669"/>
    <property type="project" value="UniProtKB-KW"/>
</dbReference>
<dbReference type="GO" id="GO:0005840">
    <property type="term" value="C:ribosome"/>
    <property type="evidence" value="ECO:0007669"/>
    <property type="project" value="UniProtKB-KW"/>
</dbReference>
<dbReference type="GO" id="GO:0019843">
    <property type="term" value="F:rRNA binding"/>
    <property type="evidence" value="ECO:0007669"/>
    <property type="project" value="UniProtKB-UniRule"/>
</dbReference>
<dbReference type="GO" id="GO:0003735">
    <property type="term" value="F:structural constituent of ribosome"/>
    <property type="evidence" value="ECO:0007669"/>
    <property type="project" value="InterPro"/>
</dbReference>
<dbReference type="GO" id="GO:0006412">
    <property type="term" value="P:translation"/>
    <property type="evidence" value="ECO:0007669"/>
    <property type="project" value="UniProtKB-UniRule"/>
</dbReference>
<dbReference type="HAMAP" id="MF_01363">
    <property type="entry name" value="Ribosomal_bL21"/>
    <property type="match status" value="1"/>
</dbReference>
<dbReference type="InterPro" id="IPR028909">
    <property type="entry name" value="bL21-like"/>
</dbReference>
<dbReference type="InterPro" id="IPR036164">
    <property type="entry name" value="bL21-like_sf"/>
</dbReference>
<dbReference type="InterPro" id="IPR001787">
    <property type="entry name" value="Ribosomal_bL21"/>
</dbReference>
<dbReference type="InterPro" id="IPR018258">
    <property type="entry name" value="Ribosomal_bL21_CS"/>
</dbReference>
<dbReference type="NCBIfam" id="TIGR00061">
    <property type="entry name" value="L21"/>
    <property type="match status" value="1"/>
</dbReference>
<dbReference type="PANTHER" id="PTHR21349">
    <property type="entry name" value="50S RIBOSOMAL PROTEIN L21"/>
    <property type="match status" value="1"/>
</dbReference>
<dbReference type="PANTHER" id="PTHR21349:SF0">
    <property type="entry name" value="LARGE RIBOSOMAL SUBUNIT PROTEIN BL21M"/>
    <property type="match status" value="1"/>
</dbReference>
<dbReference type="Pfam" id="PF00829">
    <property type="entry name" value="Ribosomal_L21p"/>
    <property type="match status" value="1"/>
</dbReference>
<dbReference type="SUPFAM" id="SSF141091">
    <property type="entry name" value="L21p-like"/>
    <property type="match status" value="1"/>
</dbReference>
<dbReference type="PROSITE" id="PS01169">
    <property type="entry name" value="RIBOSOMAL_L21"/>
    <property type="match status" value="1"/>
</dbReference>
<evidence type="ECO:0000255" key="1">
    <source>
        <dbReference type="HAMAP-Rule" id="MF_01363"/>
    </source>
</evidence>
<evidence type="ECO:0000305" key="2"/>
<reference key="1">
    <citation type="submission" date="2008-04" db="EMBL/GenBank/DDBJ databases">
        <title>Complete sequence of chromosome of Natranaerobius thermophilus JW/NM-WN-LF.</title>
        <authorList>
            <consortium name="US DOE Joint Genome Institute"/>
            <person name="Copeland A."/>
            <person name="Lucas S."/>
            <person name="Lapidus A."/>
            <person name="Glavina del Rio T."/>
            <person name="Dalin E."/>
            <person name="Tice H."/>
            <person name="Bruce D."/>
            <person name="Goodwin L."/>
            <person name="Pitluck S."/>
            <person name="Chertkov O."/>
            <person name="Brettin T."/>
            <person name="Detter J.C."/>
            <person name="Han C."/>
            <person name="Kuske C.R."/>
            <person name="Schmutz J."/>
            <person name="Larimer F."/>
            <person name="Land M."/>
            <person name="Hauser L."/>
            <person name="Kyrpides N."/>
            <person name="Lykidis A."/>
            <person name="Mesbah N.M."/>
            <person name="Wiegel J."/>
        </authorList>
    </citation>
    <scope>NUCLEOTIDE SEQUENCE [LARGE SCALE GENOMIC DNA]</scope>
    <source>
        <strain>ATCC BAA-1301 / DSM 18059 / JW/NM-WN-LF</strain>
    </source>
</reference>
<proteinExistence type="inferred from homology"/>
<feature type="chain" id="PRO_1000143826" description="Large ribosomal subunit protein bL21">
    <location>
        <begin position="1"/>
        <end position="105"/>
    </location>
</feature>